<keyword id="KW-1185">Reference proteome</keyword>
<keyword id="KW-0687">Ribonucleoprotein</keyword>
<keyword id="KW-0689">Ribosomal protein</keyword>
<keyword id="KW-0694">RNA-binding</keyword>
<keyword id="KW-0699">rRNA-binding</keyword>
<keyword id="KW-0820">tRNA-binding</keyword>
<proteinExistence type="inferred from homology"/>
<reference key="1">
    <citation type="journal article" date="2008" name="PLoS ONE">
        <title>Survival in nuclear waste, extreme resistance, and potential applications gleaned from the genome sequence of Kineococcus radiotolerans SRS30216.</title>
        <authorList>
            <person name="Bagwell C.E."/>
            <person name="Bhat S."/>
            <person name="Hawkins G.M."/>
            <person name="Smith B.W."/>
            <person name="Biswas T."/>
            <person name="Hoover T.R."/>
            <person name="Saunders E."/>
            <person name="Han C.S."/>
            <person name="Tsodikov O.V."/>
            <person name="Shimkets L.J."/>
        </authorList>
    </citation>
    <scope>NUCLEOTIDE SEQUENCE [LARGE SCALE GENOMIC DNA]</scope>
    <source>
        <strain>ATCC BAA-149 / DSM 14245 / SRS30216</strain>
    </source>
</reference>
<accession>A6W5U5</accession>
<feature type="chain" id="PRO_1000086761" description="Large ribosomal subunit protein uL16">
    <location>
        <begin position="1"/>
        <end position="138"/>
    </location>
</feature>
<feature type="region of interest" description="Disordered" evidence="2">
    <location>
        <begin position="1"/>
        <end position="24"/>
    </location>
</feature>
<feature type="compositionally biased region" description="Basic residues" evidence="2">
    <location>
        <begin position="1"/>
        <end position="17"/>
    </location>
</feature>
<evidence type="ECO:0000255" key="1">
    <source>
        <dbReference type="HAMAP-Rule" id="MF_01342"/>
    </source>
</evidence>
<evidence type="ECO:0000256" key="2">
    <source>
        <dbReference type="SAM" id="MobiDB-lite"/>
    </source>
</evidence>
<evidence type="ECO:0000305" key="3"/>
<organism>
    <name type="scientific">Kineococcus radiotolerans (strain ATCC BAA-149 / DSM 14245 / SRS30216)</name>
    <dbReference type="NCBI Taxonomy" id="266940"/>
    <lineage>
        <taxon>Bacteria</taxon>
        <taxon>Bacillati</taxon>
        <taxon>Actinomycetota</taxon>
        <taxon>Actinomycetes</taxon>
        <taxon>Kineosporiales</taxon>
        <taxon>Kineosporiaceae</taxon>
        <taxon>Kineococcus</taxon>
    </lineage>
</organism>
<sequence>MLIPRRVKHRKQHHPTRRGAASGGTRVTFGDYGIMAVEGGYVTNRQIESARIAITRHIRRGGKVWINIYPDRPLTKKPAETRMGSGKGSPEWWIANIKPGRVMFELSFPTEKIATEALTRAIHKLPVKCKIVRREGGE</sequence>
<protein>
    <recommendedName>
        <fullName evidence="1">Large ribosomal subunit protein uL16</fullName>
    </recommendedName>
    <alternativeName>
        <fullName evidence="3">50S ribosomal protein L16</fullName>
    </alternativeName>
</protein>
<gene>
    <name evidence="1" type="primary">rplP</name>
    <name type="ordered locus">Krad_0695</name>
</gene>
<dbReference type="EMBL" id="CP000750">
    <property type="protein sequence ID" value="ABS02184.1"/>
    <property type="molecule type" value="Genomic_DNA"/>
</dbReference>
<dbReference type="RefSeq" id="WP_012084974.1">
    <property type="nucleotide sequence ID" value="NC_009664.2"/>
</dbReference>
<dbReference type="SMR" id="A6W5U5"/>
<dbReference type="STRING" id="266940.Krad_0695"/>
<dbReference type="KEGG" id="kra:Krad_0695"/>
<dbReference type="eggNOG" id="COG0197">
    <property type="taxonomic scope" value="Bacteria"/>
</dbReference>
<dbReference type="HOGENOM" id="CLU_078858_2_1_11"/>
<dbReference type="OrthoDB" id="9802589at2"/>
<dbReference type="Proteomes" id="UP000001116">
    <property type="component" value="Chromosome"/>
</dbReference>
<dbReference type="GO" id="GO:0022625">
    <property type="term" value="C:cytosolic large ribosomal subunit"/>
    <property type="evidence" value="ECO:0007669"/>
    <property type="project" value="TreeGrafter"/>
</dbReference>
<dbReference type="GO" id="GO:0019843">
    <property type="term" value="F:rRNA binding"/>
    <property type="evidence" value="ECO:0007669"/>
    <property type="project" value="UniProtKB-UniRule"/>
</dbReference>
<dbReference type="GO" id="GO:0003735">
    <property type="term" value="F:structural constituent of ribosome"/>
    <property type="evidence" value="ECO:0007669"/>
    <property type="project" value="InterPro"/>
</dbReference>
<dbReference type="GO" id="GO:0000049">
    <property type="term" value="F:tRNA binding"/>
    <property type="evidence" value="ECO:0007669"/>
    <property type="project" value="UniProtKB-KW"/>
</dbReference>
<dbReference type="GO" id="GO:0006412">
    <property type="term" value="P:translation"/>
    <property type="evidence" value="ECO:0007669"/>
    <property type="project" value="UniProtKB-UniRule"/>
</dbReference>
<dbReference type="CDD" id="cd01433">
    <property type="entry name" value="Ribosomal_L16_L10e"/>
    <property type="match status" value="1"/>
</dbReference>
<dbReference type="FunFam" id="3.90.1170.10:FF:000001">
    <property type="entry name" value="50S ribosomal protein L16"/>
    <property type="match status" value="1"/>
</dbReference>
<dbReference type="Gene3D" id="3.90.1170.10">
    <property type="entry name" value="Ribosomal protein L10e/L16"/>
    <property type="match status" value="1"/>
</dbReference>
<dbReference type="HAMAP" id="MF_01342">
    <property type="entry name" value="Ribosomal_uL16"/>
    <property type="match status" value="1"/>
</dbReference>
<dbReference type="InterPro" id="IPR047873">
    <property type="entry name" value="Ribosomal_uL16"/>
</dbReference>
<dbReference type="InterPro" id="IPR000114">
    <property type="entry name" value="Ribosomal_uL16_bact-type"/>
</dbReference>
<dbReference type="InterPro" id="IPR020798">
    <property type="entry name" value="Ribosomal_uL16_CS"/>
</dbReference>
<dbReference type="InterPro" id="IPR016180">
    <property type="entry name" value="Ribosomal_uL16_dom"/>
</dbReference>
<dbReference type="InterPro" id="IPR036920">
    <property type="entry name" value="Ribosomal_uL16_sf"/>
</dbReference>
<dbReference type="NCBIfam" id="TIGR01164">
    <property type="entry name" value="rplP_bact"/>
    <property type="match status" value="1"/>
</dbReference>
<dbReference type="PANTHER" id="PTHR12220">
    <property type="entry name" value="50S/60S RIBOSOMAL PROTEIN L16"/>
    <property type="match status" value="1"/>
</dbReference>
<dbReference type="PANTHER" id="PTHR12220:SF13">
    <property type="entry name" value="LARGE RIBOSOMAL SUBUNIT PROTEIN UL16M"/>
    <property type="match status" value="1"/>
</dbReference>
<dbReference type="Pfam" id="PF00252">
    <property type="entry name" value="Ribosomal_L16"/>
    <property type="match status" value="1"/>
</dbReference>
<dbReference type="PRINTS" id="PR00060">
    <property type="entry name" value="RIBOSOMALL16"/>
</dbReference>
<dbReference type="SUPFAM" id="SSF54686">
    <property type="entry name" value="Ribosomal protein L16p/L10e"/>
    <property type="match status" value="1"/>
</dbReference>
<dbReference type="PROSITE" id="PS00586">
    <property type="entry name" value="RIBOSOMAL_L16_1"/>
    <property type="match status" value="1"/>
</dbReference>
<dbReference type="PROSITE" id="PS00701">
    <property type="entry name" value="RIBOSOMAL_L16_2"/>
    <property type="match status" value="1"/>
</dbReference>
<name>RL16_KINRD</name>
<comment type="function">
    <text evidence="1">Binds 23S rRNA and is also seen to make contacts with the A and possibly P site tRNAs.</text>
</comment>
<comment type="subunit">
    <text evidence="1">Part of the 50S ribosomal subunit.</text>
</comment>
<comment type="similarity">
    <text evidence="1">Belongs to the universal ribosomal protein uL16 family.</text>
</comment>